<organism>
    <name type="scientific">Salmonella choleraesuis (strain SC-B67)</name>
    <dbReference type="NCBI Taxonomy" id="321314"/>
    <lineage>
        <taxon>Bacteria</taxon>
        <taxon>Pseudomonadati</taxon>
        <taxon>Pseudomonadota</taxon>
        <taxon>Gammaproteobacteria</taxon>
        <taxon>Enterobacterales</taxon>
        <taxon>Enterobacteriaceae</taxon>
        <taxon>Salmonella</taxon>
    </lineage>
</organism>
<reference key="1">
    <citation type="journal article" date="2005" name="Nucleic Acids Res.">
        <title>The genome sequence of Salmonella enterica serovar Choleraesuis, a highly invasive and resistant zoonotic pathogen.</title>
        <authorList>
            <person name="Chiu C.-H."/>
            <person name="Tang P."/>
            <person name="Chu C."/>
            <person name="Hu S."/>
            <person name="Bao Q."/>
            <person name="Yu J."/>
            <person name="Chou Y.-Y."/>
            <person name="Wang H.-S."/>
            <person name="Lee Y.-S."/>
        </authorList>
    </citation>
    <scope>NUCLEOTIDE SEQUENCE [LARGE SCALE GENOMIC DNA]</scope>
    <source>
        <strain>SC-B67</strain>
    </source>
</reference>
<proteinExistence type="inferred from homology"/>
<keyword id="KW-0143">Chaperone</keyword>
<keyword id="KW-0963">Cytoplasm</keyword>
<keyword id="KW-0346">Stress response</keyword>
<accession>Q57I24</accession>
<evidence type="ECO:0000255" key="1">
    <source>
        <dbReference type="HAMAP-Rule" id="MF_02000"/>
    </source>
</evidence>
<evidence type="ECO:0000255" key="2">
    <source>
        <dbReference type="PROSITE-ProRule" id="PRU00285"/>
    </source>
</evidence>
<dbReference type="EMBL" id="AE017220">
    <property type="protein sequence ID" value="AAX67638.1"/>
    <property type="molecule type" value="Genomic_DNA"/>
</dbReference>
<dbReference type="RefSeq" id="WP_001532742.1">
    <property type="nucleotide sequence ID" value="NC_006905.1"/>
</dbReference>
<dbReference type="SMR" id="Q57I24"/>
<dbReference type="GeneID" id="84234411"/>
<dbReference type="KEGG" id="sec:SCH_3732"/>
<dbReference type="HOGENOM" id="CLU_046737_4_2_6"/>
<dbReference type="Proteomes" id="UP000000538">
    <property type="component" value="Chromosome"/>
</dbReference>
<dbReference type="GO" id="GO:0005737">
    <property type="term" value="C:cytoplasm"/>
    <property type="evidence" value="ECO:0007669"/>
    <property type="project" value="UniProtKB-SubCell"/>
</dbReference>
<dbReference type="GO" id="GO:0050821">
    <property type="term" value="P:protein stabilization"/>
    <property type="evidence" value="ECO:0007669"/>
    <property type="project" value="UniProtKB-UniRule"/>
</dbReference>
<dbReference type="CDD" id="cd06470">
    <property type="entry name" value="ACD_IbpA-B_like"/>
    <property type="match status" value="1"/>
</dbReference>
<dbReference type="FunFam" id="2.60.40.790:FF:000002">
    <property type="entry name" value="Small heat shock protein IbpA"/>
    <property type="match status" value="1"/>
</dbReference>
<dbReference type="Gene3D" id="2.60.40.790">
    <property type="match status" value="1"/>
</dbReference>
<dbReference type="HAMAP" id="MF_02000">
    <property type="entry name" value="HSP20_IbpA"/>
    <property type="match status" value="1"/>
</dbReference>
<dbReference type="InterPro" id="IPR002068">
    <property type="entry name" value="A-crystallin/Hsp20_dom"/>
</dbReference>
<dbReference type="InterPro" id="IPR037913">
    <property type="entry name" value="ACD_IbpA/B"/>
</dbReference>
<dbReference type="InterPro" id="IPR008978">
    <property type="entry name" value="HSP20-like_chaperone"/>
</dbReference>
<dbReference type="InterPro" id="IPR023728">
    <property type="entry name" value="HSP20_IbpA"/>
</dbReference>
<dbReference type="NCBIfam" id="NF008013">
    <property type="entry name" value="PRK10743.1"/>
    <property type="match status" value="1"/>
</dbReference>
<dbReference type="PANTHER" id="PTHR47062">
    <property type="match status" value="1"/>
</dbReference>
<dbReference type="PANTHER" id="PTHR47062:SF1">
    <property type="entry name" value="SMALL HEAT SHOCK PROTEIN IBPA"/>
    <property type="match status" value="1"/>
</dbReference>
<dbReference type="Pfam" id="PF00011">
    <property type="entry name" value="HSP20"/>
    <property type="match status" value="1"/>
</dbReference>
<dbReference type="SUPFAM" id="SSF49764">
    <property type="entry name" value="HSP20-like chaperones"/>
    <property type="match status" value="1"/>
</dbReference>
<dbReference type="PROSITE" id="PS01031">
    <property type="entry name" value="SHSP"/>
    <property type="match status" value="1"/>
</dbReference>
<feature type="chain" id="PRO_0000126021" description="Small heat shock protein IbpA">
    <location>
        <begin position="1"/>
        <end position="137"/>
    </location>
</feature>
<feature type="domain" description="sHSP" evidence="2">
    <location>
        <begin position="28"/>
        <end position="137"/>
    </location>
</feature>
<gene>
    <name evidence="1" type="primary">ibpA</name>
    <name type="ordered locus">SCH_3732</name>
</gene>
<protein>
    <recommendedName>
        <fullName evidence="1">Small heat shock protein IbpA</fullName>
    </recommendedName>
    <alternativeName>
        <fullName evidence="1">16 kDa heat shock protein A</fullName>
    </alternativeName>
</protein>
<name>IBPA_SALCH</name>
<comment type="function">
    <text evidence="1">Associates with aggregated proteins, together with IbpB, to stabilize and protect them from irreversible denaturation and extensive proteolysis during heat shock and oxidative stress. Aggregated proteins bound to the IbpAB complex are more efficiently refolded and reactivated by the ATP-dependent chaperone systems ClpB and DnaK/DnaJ/GrpE. Its activity is ATP-independent.</text>
</comment>
<comment type="subunit">
    <text evidence="1">Monomer. Forms homomultimers of about 100-150 subunits at optimal growth temperatures. Conformation changes to monomers at high temperatures or high ionic concentrations.</text>
</comment>
<comment type="subcellular location">
    <subcellularLocation>
        <location evidence="1">Cytoplasm</location>
    </subcellularLocation>
</comment>
<comment type="similarity">
    <text evidence="1 2">Belongs to the small heat shock protein (HSP20) family.</text>
</comment>
<sequence length="137" mass="15750">MRNFDLSPLYRSAIGFDRLFNLLENNQSQSNGGYPPYNVELVDENHYRIAIAVAGFAESELEITAQDNLLVVKGAHADEQKERTYLYQGIAERNFERKFQLAENIHVRGANLVNGLLYIELERVIPEANKPRRIEIN</sequence>